<sequence>MKVGIVGSGMVGSATAYALALLGVAREVVLVDLDRKLAQAHAEDILHATPFAHPVWVRAGSYGDLEGARAVVLAAGVAQRPGETRLQLLDRNAQVFAQVVPRVLEAAPEAVLLVATNPVDVMTQVAYRLSALPPGRVVGSGTILDTARFRALLAEHLRVAPQSVHAYVLGEHGDSEVLVWSSAQVGGVPLLEFAEARGRALSPEDRARIDEGVRRAAYRIIEGKGATYYGIGAGLARLVRAILTDEKGVYTVSAFTPEVEGVLEVSLSLPRILGAGGVEGTVYPSLSPEEREALRRSAEILKEAAFALGF</sequence>
<organism>
    <name type="scientific">Thermus caldophilus</name>
    <dbReference type="NCBI Taxonomy" id="272"/>
    <lineage>
        <taxon>Bacteria</taxon>
        <taxon>Thermotogati</taxon>
        <taxon>Deinococcota</taxon>
        <taxon>Deinococci</taxon>
        <taxon>Thermales</taxon>
        <taxon>Thermaceae</taxon>
        <taxon>Thermus</taxon>
    </lineage>
</organism>
<proteinExistence type="evidence at protein level"/>
<dbReference type="EC" id="1.1.1.27" evidence="1 2 3 5 9"/>
<dbReference type="EMBL" id="X04519">
    <property type="protein sequence ID" value="CAA28203.1"/>
    <property type="molecule type" value="Genomic_DNA"/>
</dbReference>
<dbReference type="PIR" id="A24999">
    <property type="entry name" value="A24999"/>
</dbReference>
<dbReference type="PDB" id="3VPG">
    <property type="method" value="X-ray"/>
    <property type="resolution" value="1.80 A"/>
    <property type="chains" value="A/B/C/D=1-310"/>
</dbReference>
<dbReference type="PDB" id="3VPH">
    <property type="method" value="X-ray"/>
    <property type="resolution" value="2.00 A"/>
    <property type="chains" value="A/B/C/D=1-310"/>
</dbReference>
<dbReference type="PDBsum" id="3VPG"/>
<dbReference type="PDBsum" id="3VPH"/>
<dbReference type="SMR" id="P06150"/>
<dbReference type="UniPathway" id="UPA00554">
    <property type="reaction ID" value="UER00611"/>
</dbReference>
<dbReference type="EvolutionaryTrace" id="P06150"/>
<dbReference type="GO" id="GO:0005737">
    <property type="term" value="C:cytoplasm"/>
    <property type="evidence" value="ECO:0007669"/>
    <property type="project" value="UniProtKB-SubCell"/>
</dbReference>
<dbReference type="GO" id="GO:0004459">
    <property type="term" value="F:L-lactate dehydrogenase activity"/>
    <property type="evidence" value="ECO:0007669"/>
    <property type="project" value="UniProtKB-UniRule"/>
</dbReference>
<dbReference type="GO" id="GO:0006096">
    <property type="term" value="P:glycolytic process"/>
    <property type="evidence" value="ECO:0007669"/>
    <property type="project" value="UniProtKB-UniRule"/>
</dbReference>
<dbReference type="GO" id="GO:0006089">
    <property type="term" value="P:lactate metabolic process"/>
    <property type="evidence" value="ECO:0007669"/>
    <property type="project" value="TreeGrafter"/>
</dbReference>
<dbReference type="CDD" id="cd05292">
    <property type="entry name" value="LDH_2"/>
    <property type="match status" value="1"/>
</dbReference>
<dbReference type="Gene3D" id="3.90.110.10">
    <property type="entry name" value="Lactate dehydrogenase/glycoside hydrolase, family 4, C-terminal"/>
    <property type="match status" value="1"/>
</dbReference>
<dbReference type="Gene3D" id="3.40.50.720">
    <property type="entry name" value="NAD(P)-binding Rossmann-like Domain"/>
    <property type="match status" value="1"/>
</dbReference>
<dbReference type="HAMAP" id="MF_00488">
    <property type="entry name" value="Lactate_dehydrog"/>
    <property type="match status" value="1"/>
</dbReference>
<dbReference type="InterPro" id="IPR001557">
    <property type="entry name" value="L-lactate/malate_DH"/>
</dbReference>
<dbReference type="InterPro" id="IPR011304">
    <property type="entry name" value="L-lactate_DH"/>
</dbReference>
<dbReference type="InterPro" id="IPR018177">
    <property type="entry name" value="L-lactate_DH_AS"/>
</dbReference>
<dbReference type="InterPro" id="IPR022383">
    <property type="entry name" value="Lactate/malate_DH_C"/>
</dbReference>
<dbReference type="InterPro" id="IPR001236">
    <property type="entry name" value="Lactate/malate_DH_N"/>
</dbReference>
<dbReference type="InterPro" id="IPR015955">
    <property type="entry name" value="Lactate_DH/Glyco_Ohase_4_C"/>
</dbReference>
<dbReference type="InterPro" id="IPR036291">
    <property type="entry name" value="NAD(P)-bd_dom_sf"/>
</dbReference>
<dbReference type="NCBIfam" id="TIGR01771">
    <property type="entry name" value="L-LDH-NAD"/>
    <property type="match status" value="1"/>
</dbReference>
<dbReference type="PANTHER" id="PTHR43128">
    <property type="entry name" value="L-2-HYDROXYCARBOXYLATE DEHYDROGENASE (NAD(P)(+))"/>
    <property type="match status" value="1"/>
</dbReference>
<dbReference type="PANTHER" id="PTHR43128:SF16">
    <property type="entry name" value="L-LACTATE DEHYDROGENASE"/>
    <property type="match status" value="1"/>
</dbReference>
<dbReference type="Pfam" id="PF02866">
    <property type="entry name" value="Ldh_1_C"/>
    <property type="match status" value="1"/>
</dbReference>
<dbReference type="Pfam" id="PF00056">
    <property type="entry name" value="Ldh_1_N"/>
    <property type="match status" value="1"/>
</dbReference>
<dbReference type="PIRSF" id="PIRSF000102">
    <property type="entry name" value="Lac_mal_DH"/>
    <property type="match status" value="1"/>
</dbReference>
<dbReference type="PRINTS" id="PR00086">
    <property type="entry name" value="LLDHDRGNASE"/>
</dbReference>
<dbReference type="SUPFAM" id="SSF56327">
    <property type="entry name" value="LDH C-terminal domain-like"/>
    <property type="match status" value="1"/>
</dbReference>
<dbReference type="SUPFAM" id="SSF51735">
    <property type="entry name" value="NAD(P)-binding Rossmann-fold domains"/>
    <property type="match status" value="1"/>
</dbReference>
<dbReference type="PROSITE" id="PS00064">
    <property type="entry name" value="L_LDH"/>
    <property type="match status" value="1"/>
</dbReference>
<protein>
    <recommendedName>
        <fullName evidence="1 6">L-lactate dehydrogenase</fullName>
        <shortName evidence="1 6">L-LDH</shortName>
        <ecNumber evidence="1 2 3 5 9">1.1.1.27</ecNumber>
    </recommendedName>
</protein>
<reference key="1">
    <citation type="journal article" date="1986" name="Eur. J. Biochem.">
        <title>Nucleotide sequence and characteristics of the gene for L-lactate dehydrogenase of Thermus caldophilus GK24 and the deduced amino-acid sequence of the enzyme.</title>
        <authorList>
            <person name="Kunai K."/>
            <person name="Machida M."/>
            <person name="Matsuzawa H."/>
            <person name="Ohta T."/>
        </authorList>
    </citation>
    <scope>NUCLEOTIDE SEQUENCE [GENOMIC DNA]</scope>
    <scope>FUNCTION</scope>
    <source>
        <strain>GK24</strain>
    </source>
</reference>
<reference key="2">
    <citation type="journal article" date="1984" name="Eur. J. Biochem.">
        <title>L-Lactate dehydrogenase from Thermus caldophilus GK24, an extremely thermophilic bacterium. Desensitization to fructose 1,6-bisphosphate in the activated state by arginine-specific chemical modification and the N-terminal amino acid sequence.</title>
        <authorList>
            <person name="Taguchi H."/>
            <person name="Matsuzawa H."/>
            <person name="Ohta T."/>
        </authorList>
    </citation>
    <scope>PROTEIN SEQUENCE OF 1-34</scope>
    <scope>FUNCTION</scope>
    <scope>CATALYTIC ACTIVITY</scope>
    <source>
        <strain>GK24</strain>
    </source>
</reference>
<reference key="3">
    <citation type="journal article" date="1988" name="Biochem. Biophys. Res. Commun.">
        <title>Involvement of the conserved histidine-188 residue in the L-lactate dehydrogenase from Thermus caldophilus GK24 in allosteric regulation by fructose 1,6-bisphosphate.</title>
        <authorList>
            <person name="Schroeder G."/>
            <person name="Matsuzawa H."/>
            <person name="Ohta T."/>
        </authorList>
    </citation>
    <scope>FUNCTION</scope>
    <scope>CATALYTIC ACTIVITY</scope>
    <scope>BIOPHYSICOCHEMICAL PROPERTIES</scope>
    <scope>MUTAGENESIS OF HIS-165</scope>
    <source>
        <strain>GK24</strain>
    </source>
</reference>
<reference key="4">
    <citation type="journal article" date="1988" name="FEBS Lett.">
        <title>Identification of an allosteric site residue of a fructose 1,6-bisphosphate-dependent L-lactate dehydrogenase of Thermus caldophilus GK24: production of a non-allosteric form by protein engineering.</title>
        <authorList>
            <person name="Matsuzawa H."/>
            <person name="Machida M."/>
            <person name="Kunai K."/>
            <person name="Ito Y."/>
            <person name="Ohta T."/>
        </authorList>
    </citation>
    <scope>FUNCTION</scope>
    <scope>CATALYTIC ACTIVITY</scope>
    <scope>MUTAGENESIS OF ARG-150</scope>
    <source>
        <strain>GK24</strain>
    </source>
</reference>
<reference key="5">
    <citation type="journal article" date="2014" name="J. Biol. Chem.">
        <title>The core of allosteric motion in Thermus caldophilus L-lactate dehydrogenase.</title>
        <authorList>
            <person name="Ikehara Y."/>
            <person name="Arai K."/>
            <person name="Furukawa N."/>
            <person name="Ohno T."/>
            <person name="Miyake T."/>
            <person name="Fushinobu S."/>
            <person name="Nakajima M."/>
            <person name="Miyanaga A."/>
            <person name="Taguchi H."/>
        </authorList>
    </citation>
    <scope>X-RAY CRYSTALLOGRAPHY (1.80 ANGSTROMS) IN COMPLEX WITH FRUCTOSE 1,6-BISPHOSPHATE; NAD AND SUBSTRATE ANALOG</scope>
    <scope>FUNCTION</scope>
    <scope>CATALYTIC ACTIVITY</scope>
    <scope>BIOPHYSICOCHEMICAL PROPERTIES</scope>
    <scope>ACTIVITY REGULATION</scope>
    <scope>MUTAGENESIS OF LEU-46; HIS-47; ARG-150; GLU-155; ARG-197 AND ALA-216</scope>
    <scope>ACTIVE SITE</scope>
    <scope>SUBUNIT</scope>
</reference>
<feature type="chain" id="PRO_0000168405" description="L-lactate dehydrogenase">
    <location>
        <begin position="1"/>
        <end position="310"/>
    </location>
</feature>
<feature type="active site" description="Proton acceptor" evidence="1 7">
    <location>
        <position position="172"/>
    </location>
</feature>
<feature type="binding site" evidence="2 10">
    <location>
        <begin position="10"/>
        <end position="11"/>
    </location>
    <ligand>
        <name>NAD(+)</name>
        <dbReference type="ChEBI" id="CHEBI:57540"/>
    </ligand>
</feature>
<feature type="binding site" evidence="1 2 10">
    <location>
        <position position="32"/>
    </location>
    <ligand>
        <name>NAD(+)</name>
        <dbReference type="ChEBI" id="CHEBI:57540"/>
    </ligand>
</feature>
<feature type="binding site" evidence="1 2 10">
    <location>
        <position position="62"/>
    </location>
    <ligand>
        <name>NAD(+)</name>
        <dbReference type="ChEBI" id="CHEBI:57540"/>
    </ligand>
</feature>
<feature type="binding site" evidence="1 2 10">
    <location>
        <begin position="76"/>
        <end position="77"/>
    </location>
    <ligand>
        <name>NAD(+)</name>
        <dbReference type="ChEBI" id="CHEBI:57540"/>
    </ligand>
</feature>
<feature type="binding site" evidence="1">
    <location>
        <position position="79"/>
    </location>
    <ligand>
        <name>substrate</name>
    </ligand>
</feature>
<feature type="binding site" evidence="1">
    <location>
        <position position="85"/>
    </location>
    <ligand>
        <name>substrate</name>
    </ligand>
</feature>
<feature type="binding site" evidence="1 2 10">
    <location>
        <begin position="115"/>
        <end position="117"/>
    </location>
    <ligand>
        <name>NAD(+)</name>
        <dbReference type="ChEBI" id="CHEBI:57540"/>
    </ligand>
</feature>
<feature type="binding site" evidence="1 7 10">
    <location>
        <begin position="117"/>
        <end position="120"/>
    </location>
    <ligand>
        <name>substrate</name>
    </ligand>
</feature>
<feature type="binding site" evidence="1 2 10">
    <location>
        <position position="140"/>
    </location>
    <ligand>
        <name>NAD(+)</name>
        <dbReference type="ChEBI" id="CHEBI:57540"/>
    </ligand>
</feature>
<feature type="binding site" evidence="1 7 10">
    <location>
        <begin position="145"/>
        <end position="148"/>
    </location>
    <ligand>
        <name>substrate</name>
    </ligand>
</feature>
<feature type="binding site" evidence="1 2 10">
    <location>
        <position position="150"/>
    </location>
    <ligand>
        <name>beta-D-fructose 1,6-bisphosphate</name>
        <dbReference type="ChEBI" id="CHEBI:32966"/>
        <note>allosteric activator</note>
    </ligand>
</feature>
<feature type="binding site" evidence="7 10">
    <location>
        <begin position="162"/>
        <end position="167"/>
    </location>
    <ligand>
        <name>beta-D-fructose 1,6-bisphosphate</name>
        <dbReference type="ChEBI" id="CHEBI:32966"/>
        <note>allosteric activator</note>
    </ligand>
</feature>
<feature type="binding site" evidence="1 7 10">
    <location>
        <position position="227"/>
    </location>
    <ligand>
        <name>substrate</name>
    </ligand>
</feature>
<feature type="modified residue" description="Phosphotyrosine" evidence="1">
    <location>
        <position position="218"/>
    </location>
</feature>
<feature type="mutagenesis site" description="Increases the thermal stability of the enzyme. In the absence of fructose 1,6-bisphosphate (FBP), the Q4(R) mutant exhibits a 4-fold increased Vmax value and a 5-fold increase of the affinity for pyruvate; when associated with D-47; K-155 and R-216." evidence="2">
    <original>L</original>
    <variation>E</variation>
    <location>
        <position position="46"/>
    </location>
</feature>
<feature type="mutagenesis site" description="Increases the thermal stability of the enzyme. In the absence of fructose 1,6-bisphosphate (FBP), the Q4(R) mutant exhibits a 4-fold increased Vmax value and a 5-fold increase of the affinity for pyruvate; when associated with E-46; K-155 and R-216." evidence="2">
    <original>H</original>
    <variation>D</variation>
    <location>
        <position position="47"/>
    </location>
</feature>
<feature type="mutagenesis site" description="Increases the thermal stability of the enzyme. In the absence of fructose 1,6-bisphosphate (FBP), the P2 mutant does not exhibit a markedly increased Vmax value, but shows a strong affinity for pyruvate, and additively increases the FBP-independent activity of the enzyme; when associated with L-197." evidence="2">
    <original>R</original>
    <variation>Q</variation>
    <location>
        <position position="150"/>
    </location>
</feature>
<feature type="mutagenesis site" description="The strong stimulatory effect of fructose 1,6-bisphosphate (FBP) is abolished." evidence="5">
    <original>R</original>
    <variation>Q</variation>
    <location>
        <position position="150"/>
    </location>
</feature>
<feature type="mutagenesis site" description="Increases the thermal stability of the enzyme. In the absence of fructose 1,6-bisphosphate (FBP), the Q4(R) mutant exhibits a 4-fold increased Vmax value and a 5-fold increase of the affinity for pyruvate; when associated with E-46; D-47 and R-216." evidence="2">
    <original>E</original>
    <variation>K</variation>
    <location>
        <position position="155"/>
    </location>
</feature>
<feature type="mutagenesis site" description="The strong stimulatory effect of fructose 1,6-bisphosphate (FBP) is abolished." evidence="3">
    <original>H</original>
    <variation>F</variation>
    <location>
        <position position="165"/>
    </location>
</feature>
<feature type="mutagenesis site" description="Increases the thermal stability of the enzyme. In the absence of fructose 1,6-bisphosphate (FBP), the P2 mutant does not exhibit a markedly increased Vmax value, but shows a strong affinity for pyruvate, and additively increases the FBP-independent activity of the enzyme; when associated with Q-150." evidence="2">
    <original>R</original>
    <variation>L</variation>
    <location>
        <position position="197"/>
    </location>
</feature>
<feature type="mutagenesis site" description="Increases the thermal stability of the enzyme. In the absence of fructose 1,6-bisphosphate (FBP), the Q4(R) mutant exhibits a 4-fold increased Vmax value and a 5-fold increase of the affinity for pyruvate; when associated with E-46; D-47 and K-155." evidence="2">
    <original>A</original>
    <variation>R</variation>
    <location>
        <position position="216"/>
    </location>
</feature>
<feature type="strand" evidence="11">
    <location>
        <begin position="2"/>
        <end position="6"/>
    </location>
</feature>
<feature type="helix" evidence="11">
    <location>
        <begin position="10"/>
        <end position="22"/>
    </location>
</feature>
<feature type="strand" evidence="11">
    <location>
        <begin position="26"/>
        <end position="31"/>
    </location>
</feature>
<feature type="helix" evidence="11">
    <location>
        <begin position="35"/>
        <end position="46"/>
    </location>
</feature>
<feature type="helix" evidence="11">
    <location>
        <begin position="49"/>
        <end position="51"/>
    </location>
</feature>
<feature type="strand" evidence="11">
    <location>
        <begin position="56"/>
        <end position="59"/>
    </location>
</feature>
<feature type="helix" evidence="11">
    <location>
        <begin position="62"/>
        <end position="65"/>
    </location>
</feature>
<feature type="strand" evidence="11">
    <location>
        <begin position="69"/>
        <end position="73"/>
    </location>
</feature>
<feature type="helix" evidence="11">
    <location>
        <begin position="85"/>
        <end position="106"/>
    </location>
</feature>
<feature type="strand" evidence="11">
    <location>
        <begin position="111"/>
        <end position="114"/>
    </location>
</feature>
<feature type="strand" evidence="11">
    <location>
        <begin position="116"/>
        <end position="118"/>
    </location>
</feature>
<feature type="helix" evidence="11">
    <location>
        <begin position="119"/>
        <end position="130"/>
    </location>
</feature>
<feature type="helix" evidence="11">
    <location>
        <begin position="134"/>
        <end position="136"/>
    </location>
</feature>
<feature type="strand" evidence="11">
    <location>
        <begin position="137"/>
        <end position="139"/>
    </location>
</feature>
<feature type="helix" evidence="11">
    <location>
        <begin position="143"/>
        <end position="157"/>
    </location>
</feature>
<feature type="helix" evidence="11">
    <location>
        <begin position="161"/>
        <end position="163"/>
    </location>
</feature>
<feature type="strand" evidence="11">
    <location>
        <begin position="168"/>
        <end position="173"/>
    </location>
</feature>
<feature type="helix" evidence="11">
    <location>
        <begin position="190"/>
        <end position="196"/>
    </location>
</feature>
<feature type="helix" evidence="11">
    <location>
        <begin position="203"/>
        <end position="214"/>
    </location>
</feature>
<feature type="helix" evidence="11">
    <location>
        <begin position="216"/>
        <end position="224"/>
    </location>
</feature>
<feature type="helix" evidence="11">
    <location>
        <begin position="229"/>
        <end position="243"/>
    </location>
</feature>
<feature type="strand" evidence="11">
    <location>
        <begin position="248"/>
        <end position="259"/>
    </location>
</feature>
<feature type="strand" evidence="11">
    <location>
        <begin position="262"/>
        <end position="274"/>
    </location>
</feature>
<feature type="strand" evidence="11">
    <location>
        <begin position="277"/>
        <end position="281"/>
    </location>
</feature>
<feature type="helix" evidence="11">
    <location>
        <begin position="288"/>
        <end position="308"/>
    </location>
</feature>
<accession>P06150</accession>
<comment type="function">
    <text evidence="1 2 3 4 5 8">Catalyzes the conversion of lactate to pyruvate.</text>
</comment>
<comment type="catalytic activity">
    <reaction evidence="1 2 3 5 9">
        <text>(S)-lactate + NAD(+) = pyruvate + NADH + H(+)</text>
        <dbReference type="Rhea" id="RHEA:23444"/>
        <dbReference type="ChEBI" id="CHEBI:15361"/>
        <dbReference type="ChEBI" id="CHEBI:15378"/>
        <dbReference type="ChEBI" id="CHEBI:16651"/>
        <dbReference type="ChEBI" id="CHEBI:57540"/>
        <dbReference type="ChEBI" id="CHEBI:57945"/>
        <dbReference type="EC" id="1.1.1.27"/>
    </reaction>
</comment>
<comment type="activity regulation">
    <text evidence="2">Allosterically activated by fructose 1,6-bisphosphate (FBP). It binds two fructose 1,6-bisphosphate (FBP) molecules per tetramer.</text>
</comment>
<comment type="biophysicochemical properties">
    <kinetics>
        <KM evidence="3">0.02 mM for pyruvate (in the presence of fructose 1,6-bisphosphate (FBP))</KM>
        <KM evidence="3">0.03 mM for NADH (in the presence and in the absence of fructose 1,6-bisphosphate (FBP))</KM>
        <KM evidence="2">0.04 mM for pyruvate (in the presence of fructose 1,6-bisphosphate (FBP))</KM>
        <KM evidence="3">7.8 mM for pyruvate (in the absence of fructose 1,6-bisphosphate (FBP))</KM>
        <KM evidence="2">36 mM for pyruvate (in the absence of fructose 1,6-bisphosphate (FBP))</KM>
        <Vmax evidence="2">40.1 umol/min/mg enzyme with pyruvate as substrate (in the presence of fructose 1,6-bisphosphate (FBP))</Vmax>
        <Vmax evidence="2">11.0 umol/min/mg enzyme with pyruvate as substrate (in the absence of fructose 1,6-bisphosphate (FBP))</Vmax>
        <text evidence="3">kcat is 745 sec(-1) for pyruvate (in the presence of fructose 1,6-bisphosphate (FBP)). kcat is 131 sec(-1) for pyruvate (in the absence of fructose 1,6-bisphosphate (FBP)).</text>
    </kinetics>
</comment>
<comment type="pathway">
    <text evidence="1">Fermentation; pyruvate fermentation to lactate; (S)-lactate from pyruvate: step 1/1.</text>
</comment>
<comment type="subunit">
    <text evidence="1 2">Homotetramer.</text>
</comment>
<comment type="subcellular location">
    <subcellularLocation>
        <location evidence="1">Cytoplasm</location>
    </subcellularLocation>
</comment>
<comment type="similarity">
    <text evidence="1">Belongs to the LDH/MDH superfamily. LDH family.</text>
</comment>
<name>LDH_THECA</name>
<evidence type="ECO:0000255" key="1">
    <source>
        <dbReference type="HAMAP-Rule" id="MF_00488"/>
    </source>
</evidence>
<evidence type="ECO:0000269" key="2">
    <source>
    </source>
</evidence>
<evidence type="ECO:0000269" key="3">
    <source>
    </source>
</evidence>
<evidence type="ECO:0000269" key="4">
    <source>
    </source>
</evidence>
<evidence type="ECO:0000269" key="5">
    <source ref="4"/>
</evidence>
<evidence type="ECO:0000303" key="6">
    <source>
    </source>
</evidence>
<evidence type="ECO:0000305" key="7">
    <source>
    </source>
</evidence>
<evidence type="ECO:0000305" key="8">
    <source>
    </source>
</evidence>
<evidence type="ECO:0000305" key="9">
    <source>
    </source>
</evidence>
<evidence type="ECO:0007744" key="10">
    <source>
        <dbReference type="PDB" id="3VPH"/>
    </source>
</evidence>
<evidence type="ECO:0007829" key="11">
    <source>
        <dbReference type="PDB" id="3VPG"/>
    </source>
</evidence>
<keyword id="KW-0002">3D-structure</keyword>
<keyword id="KW-0021">Allosteric enzyme</keyword>
<keyword id="KW-0963">Cytoplasm</keyword>
<keyword id="KW-0903">Direct protein sequencing</keyword>
<keyword id="KW-0520">NAD</keyword>
<keyword id="KW-0560">Oxidoreductase</keyword>
<keyword id="KW-0597">Phosphoprotein</keyword>
<gene>
    <name evidence="1 6" type="primary">ldh</name>
</gene>